<comment type="subcellular location">
    <subcellularLocation>
        <location evidence="1">Cell inner membrane</location>
        <topology evidence="1">Multi-pass membrane protein</topology>
    </subcellularLocation>
</comment>
<comment type="similarity">
    <text evidence="1">Belongs to the UPF0259 family.</text>
</comment>
<reference key="1">
    <citation type="submission" date="2008-02" db="EMBL/GenBank/DDBJ databases">
        <title>Complete sequence of Escherichia coli C str. ATCC 8739.</title>
        <authorList>
            <person name="Copeland A."/>
            <person name="Lucas S."/>
            <person name="Lapidus A."/>
            <person name="Glavina del Rio T."/>
            <person name="Dalin E."/>
            <person name="Tice H."/>
            <person name="Bruce D."/>
            <person name="Goodwin L."/>
            <person name="Pitluck S."/>
            <person name="Kiss H."/>
            <person name="Brettin T."/>
            <person name="Detter J.C."/>
            <person name="Han C."/>
            <person name="Kuske C.R."/>
            <person name="Schmutz J."/>
            <person name="Larimer F."/>
            <person name="Land M."/>
            <person name="Hauser L."/>
            <person name="Kyrpides N."/>
            <person name="Mikhailova N."/>
            <person name="Ingram L."/>
            <person name="Richardson P."/>
        </authorList>
    </citation>
    <scope>NUCLEOTIDE SEQUENCE [LARGE SCALE GENOMIC DNA]</scope>
    <source>
        <strain>ATCC 8739 / DSM 1576 / NBRC 3972 / NCIMB 8545 / WDCM 00012 / Crooks</strain>
    </source>
</reference>
<feature type="chain" id="PRO_1000084489" description="UPF0259 membrane protein YciC">
    <location>
        <begin position="1"/>
        <end position="247"/>
    </location>
</feature>
<feature type="transmembrane region" description="Helical" evidence="1">
    <location>
        <begin position="20"/>
        <end position="40"/>
    </location>
</feature>
<feature type="transmembrane region" description="Helical" evidence="1">
    <location>
        <begin position="87"/>
        <end position="107"/>
    </location>
</feature>
<feature type="transmembrane region" description="Helical" evidence="1">
    <location>
        <begin position="118"/>
        <end position="140"/>
    </location>
</feature>
<feature type="transmembrane region" description="Helical" evidence="1">
    <location>
        <begin position="152"/>
        <end position="172"/>
    </location>
</feature>
<feature type="transmembrane region" description="Helical" evidence="1">
    <location>
        <begin position="187"/>
        <end position="209"/>
    </location>
</feature>
<feature type="transmembrane region" description="Helical" evidence="1">
    <location>
        <begin position="225"/>
        <end position="245"/>
    </location>
</feature>
<proteinExistence type="inferred from homology"/>
<evidence type="ECO:0000255" key="1">
    <source>
        <dbReference type="HAMAP-Rule" id="MF_01067"/>
    </source>
</evidence>
<gene>
    <name evidence="1" type="primary">yciC</name>
    <name type="ordered locus">EcolC_2372</name>
</gene>
<dbReference type="EMBL" id="CP000946">
    <property type="protein sequence ID" value="ACA78007.1"/>
    <property type="molecule type" value="Genomic_DNA"/>
</dbReference>
<dbReference type="RefSeq" id="WP_000028540.1">
    <property type="nucleotide sequence ID" value="NZ_MTFT01000016.1"/>
</dbReference>
<dbReference type="KEGG" id="ecl:EcolC_2372"/>
<dbReference type="HOGENOM" id="CLU_073287_0_0_6"/>
<dbReference type="GO" id="GO:0005886">
    <property type="term" value="C:plasma membrane"/>
    <property type="evidence" value="ECO:0007669"/>
    <property type="project" value="UniProtKB-SubCell"/>
</dbReference>
<dbReference type="HAMAP" id="MF_01067">
    <property type="entry name" value="UPF0259"/>
    <property type="match status" value="1"/>
</dbReference>
<dbReference type="InterPro" id="IPR009627">
    <property type="entry name" value="UPF0259"/>
</dbReference>
<dbReference type="NCBIfam" id="NF002774">
    <property type="entry name" value="PRK02868.1"/>
    <property type="match status" value="1"/>
</dbReference>
<dbReference type="Pfam" id="PF06790">
    <property type="entry name" value="UPF0259"/>
    <property type="match status" value="1"/>
</dbReference>
<organism>
    <name type="scientific">Escherichia coli (strain ATCC 8739 / DSM 1576 / NBRC 3972 / NCIMB 8545 / WDCM 00012 / Crooks)</name>
    <dbReference type="NCBI Taxonomy" id="481805"/>
    <lineage>
        <taxon>Bacteria</taxon>
        <taxon>Pseudomonadati</taxon>
        <taxon>Pseudomonadota</taxon>
        <taxon>Gammaproteobacteria</taxon>
        <taxon>Enterobacterales</taxon>
        <taxon>Enterobacteriaceae</taxon>
        <taxon>Escherichia</taxon>
    </lineage>
</organism>
<sequence length="247" mass="26433">MSITAQSVYRDTGNFFRNQFMTILLVSLLCAFITVVLGHVFSPSDAQLAQLNDGVPVSGSSGLFDLVQNMSPEQQQILLQASAASTFSGLIGNAILAGGVILIIQLVSAGQRVSALRAIGASAPILPKLFILIFLTTLLVQIGIMLVVVPGIIMAILLALAPVMLVQDKMGIFASMRSSMRLTWANMRLVAPAVLSWLLAKTLLLLFASSFAALTPEIGAVLANTLSNLISAILLIYLFRLYMLIRQ</sequence>
<name>YCIC_ECOLC</name>
<keyword id="KW-0997">Cell inner membrane</keyword>
<keyword id="KW-1003">Cell membrane</keyword>
<keyword id="KW-0472">Membrane</keyword>
<keyword id="KW-0812">Transmembrane</keyword>
<keyword id="KW-1133">Transmembrane helix</keyword>
<protein>
    <recommendedName>
        <fullName evidence="1">UPF0259 membrane protein YciC</fullName>
    </recommendedName>
</protein>
<accession>B1ITK0</accession>